<feature type="chain" id="PRO_0000134447" description="Isopentenyl-diphosphate delta-isomerase">
    <location>
        <begin position="1"/>
        <end position="349"/>
    </location>
</feature>
<feature type="binding site" evidence="1">
    <location>
        <begin position="5"/>
        <end position="6"/>
    </location>
    <ligand>
        <name>substrate</name>
    </ligand>
</feature>
<feature type="binding site" evidence="1">
    <location>
        <position position="62"/>
    </location>
    <ligand>
        <name>FMN</name>
        <dbReference type="ChEBI" id="CHEBI:58210"/>
    </ligand>
</feature>
<feature type="binding site" evidence="1">
    <location>
        <begin position="63"/>
        <end position="65"/>
    </location>
    <ligand>
        <name>FMN</name>
        <dbReference type="ChEBI" id="CHEBI:58210"/>
    </ligand>
</feature>
<feature type="binding site" evidence="1">
    <location>
        <begin position="93"/>
        <end position="95"/>
    </location>
    <ligand>
        <name>substrate</name>
    </ligand>
</feature>
<feature type="binding site" evidence="1">
    <location>
        <position position="93"/>
    </location>
    <ligand>
        <name>FMN</name>
        <dbReference type="ChEBI" id="CHEBI:58210"/>
    </ligand>
</feature>
<feature type="binding site" evidence="1">
    <location>
        <position position="122"/>
    </location>
    <ligand>
        <name>FMN</name>
        <dbReference type="ChEBI" id="CHEBI:58210"/>
    </ligand>
</feature>
<feature type="binding site" evidence="1">
    <location>
        <position position="151"/>
    </location>
    <ligand>
        <name>substrate</name>
    </ligand>
</feature>
<feature type="binding site" evidence="1">
    <location>
        <position position="152"/>
    </location>
    <ligand>
        <name>Mg(2+)</name>
        <dbReference type="ChEBI" id="CHEBI:18420"/>
    </ligand>
</feature>
<feature type="binding site" evidence="1">
    <location>
        <position position="183"/>
    </location>
    <ligand>
        <name>FMN</name>
        <dbReference type="ChEBI" id="CHEBI:58210"/>
    </ligand>
</feature>
<feature type="binding site" evidence="1">
    <location>
        <position position="213"/>
    </location>
    <ligand>
        <name>FMN</name>
        <dbReference type="ChEBI" id="CHEBI:58210"/>
    </ligand>
</feature>
<feature type="binding site" evidence="1">
    <location>
        <begin position="259"/>
        <end position="261"/>
    </location>
    <ligand>
        <name>FMN</name>
        <dbReference type="ChEBI" id="CHEBI:58210"/>
    </ligand>
</feature>
<feature type="binding site" evidence="1">
    <location>
        <begin position="280"/>
        <end position="281"/>
    </location>
    <ligand>
        <name>FMN</name>
        <dbReference type="ChEBI" id="CHEBI:58210"/>
    </ligand>
</feature>
<dbReference type="EC" id="5.3.3.2" evidence="1"/>
<dbReference type="EMBL" id="AE000666">
    <property type="protein sequence ID" value="AAB84555.1"/>
    <property type="molecule type" value="Genomic_DNA"/>
</dbReference>
<dbReference type="PIR" id="H69162">
    <property type="entry name" value="H69162"/>
</dbReference>
<dbReference type="RefSeq" id="WP_010875688.1">
    <property type="nucleotide sequence ID" value="NC_000916.1"/>
</dbReference>
<dbReference type="SMR" id="O26154"/>
<dbReference type="FunCoup" id="O26154">
    <property type="interactions" value="20"/>
</dbReference>
<dbReference type="STRING" id="187420.MTH_48"/>
<dbReference type="PaxDb" id="187420-MTH_48"/>
<dbReference type="EnsemblBacteria" id="AAB84555">
    <property type="protein sequence ID" value="AAB84555"/>
    <property type="gene ID" value="MTH_48"/>
</dbReference>
<dbReference type="GeneID" id="82296547"/>
<dbReference type="KEGG" id="mth:MTH_48"/>
<dbReference type="PATRIC" id="fig|187420.15.peg.46"/>
<dbReference type="HOGENOM" id="CLU_065515_1_0_2"/>
<dbReference type="InParanoid" id="O26154"/>
<dbReference type="Proteomes" id="UP000005223">
    <property type="component" value="Chromosome"/>
</dbReference>
<dbReference type="GO" id="GO:0005737">
    <property type="term" value="C:cytoplasm"/>
    <property type="evidence" value="ECO:0007669"/>
    <property type="project" value="UniProtKB-SubCell"/>
</dbReference>
<dbReference type="GO" id="GO:0010181">
    <property type="term" value="F:FMN binding"/>
    <property type="evidence" value="ECO:0007669"/>
    <property type="project" value="UniProtKB-UniRule"/>
</dbReference>
<dbReference type="GO" id="GO:0004452">
    <property type="term" value="F:isopentenyl-diphosphate delta-isomerase activity"/>
    <property type="evidence" value="ECO:0007669"/>
    <property type="project" value="UniProtKB-UniRule"/>
</dbReference>
<dbReference type="GO" id="GO:0000287">
    <property type="term" value="F:magnesium ion binding"/>
    <property type="evidence" value="ECO:0007669"/>
    <property type="project" value="UniProtKB-UniRule"/>
</dbReference>
<dbReference type="GO" id="GO:0070402">
    <property type="term" value="F:NADPH binding"/>
    <property type="evidence" value="ECO:0007669"/>
    <property type="project" value="UniProtKB-UniRule"/>
</dbReference>
<dbReference type="GO" id="GO:0016491">
    <property type="term" value="F:oxidoreductase activity"/>
    <property type="evidence" value="ECO:0007669"/>
    <property type="project" value="InterPro"/>
</dbReference>
<dbReference type="GO" id="GO:0008299">
    <property type="term" value="P:isoprenoid biosynthetic process"/>
    <property type="evidence" value="ECO:0007669"/>
    <property type="project" value="UniProtKB-UniRule"/>
</dbReference>
<dbReference type="CDD" id="cd02811">
    <property type="entry name" value="IDI-2_FMN"/>
    <property type="match status" value="1"/>
</dbReference>
<dbReference type="Gene3D" id="3.20.20.70">
    <property type="entry name" value="Aldolase class I"/>
    <property type="match status" value="1"/>
</dbReference>
<dbReference type="HAMAP" id="MF_00354">
    <property type="entry name" value="Idi_2"/>
    <property type="match status" value="1"/>
</dbReference>
<dbReference type="InterPro" id="IPR013785">
    <property type="entry name" value="Aldolase_TIM"/>
</dbReference>
<dbReference type="InterPro" id="IPR000262">
    <property type="entry name" value="FMN-dep_DH"/>
</dbReference>
<dbReference type="InterPro" id="IPR011179">
    <property type="entry name" value="IPdP_isomerase"/>
</dbReference>
<dbReference type="NCBIfam" id="TIGR02151">
    <property type="entry name" value="IPP_isom_2"/>
    <property type="match status" value="1"/>
</dbReference>
<dbReference type="PANTHER" id="PTHR43665">
    <property type="entry name" value="ISOPENTENYL-DIPHOSPHATE DELTA-ISOMERASE"/>
    <property type="match status" value="1"/>
</dbReference>
<dbReference type="PANTHER" id="PTHR43665:SF1">
    <property type="entry name" value="ISOPENTENYL-DIPHOSPHATE DELTA-ISOMERASE"/>
    <property type="match status" value="1"/>
</dbReference>
<dbReference type="Pfam" id="PF01070">
    <property type="entry name" value="FMN_dh"/>
    <property type="match status" value="2"/>
</dbReference>
<dbReference type="PIRSF" id="PIRSF003314">
    <property type="entry name" value="IPP_isomerase"/>
    <property type="match status" value="1"/>
</dbReference>
<dbReference type="SUPFAM" id="SSF51395">
    <property type="entry name" value="FMN-linked oxidoreductases"/>
    <property type="match status" value="1"/>
</dbReference>
<sequence>MISDRKLEHLILCASCDVEYRKKTGFEDIEIVHRAIPEINKEKIDISLDFLGRELSSPVMISAITGGHPASMKINRELARAAEKLGIALGLGSQRAGVEHPELEGTYTIAREEAPSAMLIGNIGSSHIEYAERAVEMIDADALAVHLNPLQESIQPGGDVDSSGALESISAIVESVDVPVMVKETGAGICSEDAIELESCGVSAIDVAGAGGTSWAAVETYRADDRYLGELFWDWGIPTAASTVEVVESVSIPVIASGGIRSGIDAAKAISLGAEMVGIALPVLEAAGHGYREVIKVIEGFNEALRTAMYLAGAETLDDLKKSPVIITGHTGEWLNQRGFETKKYARRS</sequence>
<accession>O26154</accession>
<gene>
    <name evidence="1" type="primary">fni</name>
    <name type="ordered locus">MTH_48</name>
</gene>
<proteinExistence type="inferred from homology"/>
<reference key="1">
    <citation type="journal article" date="1997" name="J. Bacteriol.">
        <title>Complete genome sequence of Methanobacterium thermoautotrophicum deltaH: functional analysis and comparative genomics.</title>
        <authorList>
            <person name="Smith D.R."/>
            <person name="Doucette-Stamm L.A."/>
            <person name="Deloughery C."/>
            <person name="Lee H.-M."/>
            <person name="Dubois J."/>
            <person name="Aldredge T."/>
            <person name="Bashirzadeh R."/>
            <person name="Blakely D."/>
            <person name="Cook R."/>
            <person name="Gilbert K."/>
            <person name="Harrison D."/>
            <person name="Hoang L."/>
            <person name="Keagle P."/>
            <person name="Lumm W."/>
            <person name="Pothier B."/>
            <person name="Qiu D."/>
            <person name="Spadafora R."/>
            <person name="Vicare R."/>
            <person name="Wang Y."/>
            <person name="Wierzbowski J."/>
            <person name="Gibson R."/>
            <person name="Jiwani N."/>
            <person name="Caruso A."/>
            <person name="Bush D."/>
            <person name="Safer H."/>
            <person name="Patwell D."/>
            <person name="Prabhakar S."/>
            <person name="McDougall S."/>
            <person name="Shimer G."/>
            <person name="Goyal A."/>
            <person name="Pietrovski S."/>
            <person name="Church G.M."/>
            <person name="Daniels C.J."/>
            <person name="Mao J.-I."/>
            <person name="Rice P."/>
            <person name="Noelling J."/>
            <person name="Reeve J.N."/>
        </authorList>
    </citation>
    <scope>NUCLEOTIDE SEQUENCE [LARGE SCALE GENOMIC DNA]</scope>
    <source>
        <strain>ATCC 29096 / DSM 1053 / JCM 10044 / NBRC 100330 / Delta H</strain>
    </source>
</reference>
<protein>
    <recommendedName>
        <fullName evidence="1">Isopentenyl-diphosphate delta-isomerase</fullName>
        <shortName evidence="1">IPP isomerase</shortName>
        <ecNumber evidence="1">5.3.3.2</ecNumber>
    </recommendedName>
    <alternativeName>
        <fullName evidence="1">Isopentenyl diphosphate:dimethylallyl diphosphate isomerase</fullName>
    </alternativeName>
    <alternativeName>
        <fullName evidence="1">Isopentenyl pyrophosphate isomerase</fullName>
    </alternativeName>
    <alternativeName>
        <fullName evidence="1">Type 2 isopentenyl diphosphate isomerase</fullName>
        <shortName evidence="1">IDI-2</shortName>
    </alternativeName>
</protein>
<comment type="function">
    <text evidence="1">Involved in the biosynthesis of isoprenoids. Catalyzes the 1,3-allylic rearrangement of the homoallylic substrate isopentenyl (IPP) to its allylic isomer, dimethylallyl diphosphate (DMAPP).</text>
</comment>
<comment type="catalytic activity">
    <reaction evidence="1">
        <text>isopentenyl diphosphate = dimethylallyl diphosphate</text>
        <dbReference type="Rhea" id="RHEA:23284"/>
        <dbReference type="ChEBI" id="CHEBI:57623"/>
        <dbReference type="ChEBI" id="CHEBI:128769"/>
        <dbReference type="EC" id="5.3.3.2"/>
    </reaction>
</comment>
<comment type="cofactor">
    <cofactor evidence="1">
        <name>FMN</name>
        <dbReference type="ChEBI" id="CHEBI:58210"/>
    </cofactor>
</comment>
<comment type="cofactor">
    <cofactor evidence="1">
        <name>NADPH</name>
        <dbReference type="ChEBI" id="CHEBI:57783"/>
    </cofactor>
</comment>
<comment type="cofactor">
    <cofactor evidence="1">
        <name>Mg(2+)</name>
        <dbReference type="ChEBI" id="CHEBI:18420"/>
    </cofactor>
</comment>
<comment type="subunit">
    <text evidence="1">Homooctamer. Dimer of tetramers.</text>
</comment>
<comment type="subcellular location">
    <subcellularLocation>
        <location evidence="1">Cytoplasm</location>
    </subcellularLocation>
</comment>
<comment type="similarity">
    <text evidence="1">Belongs to the IPP isomerase type 2 family.</text>
</comment>
<name>IDI2_METTH</name>
<organism>
    <name type="scientific">Methanothermobacter thermautotrophicus (strain ATCC 29096 / DSM 1053 / JCM 10044 / NBRC 100330 / Delta H)</name>
    <name type="common">Methanobacterium thermoautotrophicum</name>
    <dbReference type="NCBI Taxonomy" id="187420"/>
    <lineage>
        <taxon>Archaea</taxon>
        <taxon>Methanobacteriati</taxon>
        <taxon>Methanobacteriota</taxon>
        <taxon>Methanomada group</taxon>
        <taxon>Methanobacteria</taxon>
        <taxon>Methanobacteriales</taxon>
        <taxon>Methanobacteriaceae</taxon>
        <taxon>Methanothermobacter</taxon>
    </lineage>
</organism>
<evidence type="ECO:0000255" key="1">
    <source>
        <dbReference type="HAMAP-Rule" id="MF_00354"/>
    </source>
</evidence>
<keyword id="KW-0963">Cytoplasm</keyword>
<keyword id="KW-0285">Flavoprotein</keyword>
<keyword id="KW-0288">FMN</keyword>
<keyword id="KW-0413">Isomerase</keyword>
<keyword id="KW-0414">Isoprene biosynthesis</keyword>
<keyword id="KW-0460">Magnesium</keyword>
<keyword id="KW-0479">Metal-binding</keyword>
<keyword id="KW-0521">NADP</keyword>
<keyword id="KW-1185">Reference proteome</keyword>